<sequence>MQNAAPRLTFTLRDEERLMMKIGVFVPIGNNGWLISTHAPQYMPTFELNKAIVQKAEHYHFDFALSMIKLRGFGGKTEFWDHNLESFTLMAGLAAVTSRIQIYATAATLTLPPAIVARMAATIDSISGGRFGVNLVTGWQKPEYEQMGIWPGDDYFSRRYDYLTEYVQVLRDLWGTGKSDFKGDFFTMNDCRVSPQPSVPMKVICAGQSDAGMAFSAQYADFNFCFGKGVNTPTAFAPTAARMKQAAEQTGRDVGSYVLFMVIADETDDAARAKWEHYKAGADEEALSWLTEQSQKDTRSGTDTNVRQMADPTSAVNINMGTLVGSYASVARMLDEVASVPGAEGVLLTFDDFLSGIETFGERIQPLMQCRAHLPVLTQEVA</sequence>
<name>RUTA_ECO5T</name>
<reference key="1">
    <citation type="journal article" date="2009" name="Infect. Immun.">
        <title>Analysis of the genome of the Escherichia coli O157:H7 2006 spinach-associated outbreak isolate indicates candidate genes that may enhance virulence.</title>
        <authorList>
            <person name="Kulasekara B.R."/>
            <person name="Jacobs M."/>
            <person name="Zhou Y."/>
            <person name="Wu Z."/>
            <person name="Sims E."/>
            <person name="Saenphimmachak C."/>
            <person name="Rohmer L."/>
            <person name="Ritchie J.M."/>
            <person name="Radey M."/>
            <person name="McKevitt M."/>
            <person name="Freeman T.L."/>
            <person name="Hayden H."/>
            <person name="Haugen E."/>
            <person name="Gillett W."/>
            <person name="Fong C."/>
            <person name="Chang J."/>
            <person name="Beskhlebnaya V."/>
            <person name="Waldor M.K."/>
            <person name="Samadpour M."/>
            <person name="Whittam T.S."/>
            <person name="Kaul R."/>
            <person name="Brittnacher M."/>
            <person name="Miller S.I."/>
        </authorList>
    </citation>
    <scope>NUCLEOTIDE SEQUENCE [LARGE SCALE GENOMIC DNA]</scope>
    <source>
        <strain>TW14359 / EHEC</strain>
    </source>
</reference>
<proteinExistence type="inferred from homology"/>
<comment type="function">
    <text evidence="1">Catalyzes the pyrimidine ring opening between N-3 and C-4 by an unusual flavin hydroperoxide-catalyzed mechanism, adding oxygen atoms in the process to yield ureidoacrylate peracid, that immediately reacts with FMN forming ureidoacrylate and FMN-N(5)-oxide. The FMN-N(5)-oxide reacts spontaneously with NADH to produce FMN. Requires the flavin reductase RutF to regenerate FMN in vivo.</text>
</comment>
<comment type="catalytic activity">
    <reaction evidence="1">
        <text>uracil + FMNH2 + NADH + O2 = (Z)-3-ureidoacrylate + FMN + NAD(+) + H2O + H(+)</text>
        <dbReference type="Rhea" id="RHEA:31587"/>
        <dbReference type="ChEBI" id="CHEBI:15377"/>
        <dbReference type="ChEBI" id="CHEBI:15378"/>
        <dbReference type="ChEBI" id="CHEBI:15379"/>
        <dbReference type="ChEBI" id="CHEBI:17568"/>
        <dbReference type="ChEBI" id="CHEBI:57540"/>
        <dbReference type="ChEBI" id="CHEBI:57618"/>
        <dbReference type="ChEBI" id="CHEBI:57945"/>
        <dbReference type="ChEBI" id="CHEBI:58210"/>
        <dbReference type="ChEBI" id="CHEBI:59891"/>
        <dbReference type="EC" id="1.14.99.46"/>
    </reaction>
</comment>
<comment type="catalytic activity">
    <reaction evidence="1">
        <text>thymine + FMNH2 + NADH + O2 = (Z)-2-methylureidoacrylate + FMN + NAD(+) + H2O + H(+)</text>
        <dbReference type="Rhea" id="RHEA:31599"/>
        <dbReference type="ChEBI" id="CHEBI:15377"/>
        <dbReference type="ChEBI" id="CHEBI:15378"/>
        <dbReference type="ChEBI" id="CHEBI:15379"/>
        <dbReference type="ChEBI" id="CHEBI:17821"/>
        <dbReference type="ChEBI" id="CHEBI:57540"/>
        <dbReference type="ChEBI" id="CHEBI:57618"/>
        <dbReference type="ChEBI" id="CHEBI:57945"/>
        <dbReference type="ChEBI" id="CHEBI:58210"/>
        <dbReference type="ChEBI" id="CHEBI:143783"/>
        <dbReference type="EC" id="1.14.99.46"/>
    </reaction>
</comment>
<comment type="induction">
    <text evidence="1">Up-regulated by the nitrogen regulatory protein C (NtrC also called GlnG) and repressed by RutR.</text>
</comment>
<comment type="similarity">
    <text evidence="1">Belongs to the NtaA/SnaA/DszA monooxygenase family. RutA subfamily.</text>
</comment>
<evidence type="ECO:0000255" key="1">
    <source>
        <dbReference type="HAMAP-Rule" id="MF_01699"/>
    </source>
</evidence>
<feature type="chain" id="PRO_0000402610" description="Pyrimidine monooxygenase RutA">
    <location>
        <begin position="1"/>
        <end position="382"/>
    </location>
</feature>
<feature type="binding site" evidence="1">
    <location>
        <begin position="68"/>
        <end position="69"/>
    </location>
    <ligand>
        <name>FMN</name>
        <dbReference type="ChEBI" id="CHEBI:58210"/>
    </ligand>
</feature>
<feature type="binding site" evidence="1">
    <location>
        <position position="134"/>
    </location>
    <ligand>
        <name>FMN</name>
        <dbReference type="ChEBI" id="CHEBI:58210"/>
    </ligand>
</feature>
<feature type="binding site" evidence="1">
    <location>
        <position position="143"/>
    </location>
    <ligand>
        <name>FMN</name>
        <dbReference type="ChEBI" id="CHEBI:58210"/>
    </ligand>
</feature>
<feature type="binding site" evidence="1">
    <location>
        <begin position="159"/>
        <end position="160"/>
    </location>
    <ligand>
        <name>FMN</name>
        <dbReference type="ChEBI" id="CHEBI:58210"/>
    </ligand>
</feature>
<feature type="binding site" evidence="1">
    <location>
        <position position="209"/>
    </location>
    <ligand>
        <name>FMN</name>
        <dbReference type="ChEBI" id="CHEBI:58210"/>
    </ligand>
</feature>
<dbReference type="EC" id="1.14.99.46" evidence="1"/>
<dbReference type="EMBL" id="CP001368">
    <property type="protein sequence ID" value="ACT71029.1"/>
    <property type="molecule type" value="Genomic_DNA"/>
</dbReference>
<dbReference type="SMR" id="C6UPN4"/>
<dbReference type="KEGG" id="etw:ECSP_1181"/>
<dbReference type="HOGENOM" id="CLU_027853_1_1_6"/>
<dbReference type="GO" id="GO:0008726">
    <property type="term" value="F:alkanesulfonate monooxygenase activity"/>
    <property type="evidence" value="ECO:0007669"/>
    <property type="project" value="TreeGrafter"/>
</dbReference>
<dbReference type="GO" id="GO:0052614">
    <property type="term" value="F:uracil oxygenase activity"/>
    <property type="evidence" value="ECO:0007669"/>
    <property type="project" value="UniProtKB-EC"/>
</dbReference>
<dbReference type="GO" id="GO:0046306">
    <property type="term" value="P:alkanesulfonate catabolic process"/>
    <property type="evidence" value="ECO:0007669"/>
    <property type="project" value="TreeGrafter"/>
</dbReference>
<dbReference type="GO" id="GO:0019740">
    <property type="term" value="P:nitrogen utilization"/>
    <property type="evidence" value="ECO:0007669"/>
    <property type="project" value="UniProtKB-UniRule"/>
</dbReference>
<dbReference type="GO" id="GO:0006212">
    <property type="term" value="P:uracil catabolic process"/>
    <property type="evidence" value="ECO:0007669"/>
    <property type="project" value="UniProtKB-UniRule"/>
</dbReference>
<dbReference type="CDD" id="cd01094">
    <property type="entry name" value="Alkanesulfonate_monoxygenase"/>
    <property type="match status" value="1"/>
</dbReference>
<dbReference type="FunFam" id="3.20.20.30:FF:000003">
    <property type="entry name" value="Pyrimidine monooxygenase RutA"/>
    <property type="match status" value="1"/>
</dbReference>
<dbReference type="Gene3D" id="3.20.20.30">
    <property type="entry name" value="Luciferase-like domain"/>
    <property type="match status" value="1"/>
</dbReference>
<dbReference type="HAMAP" id="MF_01699">
    <property type="entry name" value="RutA"/>
    <property type="match status" value="1"/>
</dbReference>
<dbReference type="InterPro" id="IPR011251">
    <property type="entry name" value="Luciferase-like_dom"/>
</dbReference>
<dbReference type="InterPro" id="IPR036661">
    <property type="entry name" value="Luciferase-like_sf"/>
</dbReference>
<dbReference type="InterPro" id="IPR019914">
    <property type="entry name" value="Pyrimidine_monooxygenase_RutA"/>
</dbReference>
<dbReference type="InterPro" id="IPR050172">
    <property type="entry name" value="SsuD_RutA_monooxygenase"/>
</dbReference>
<dbReference type="NCBIfam" id="TIGR03612">
    <property type="entry name" value="RutA"/>
    <property type="match status" value="1"/>
</dbReference>
<dbReference type="PANTHER" id="PTHR42847">
    <property type="entry name" value="ALKANESULFONATE MONOOXYGENASE"/>
    <property type="match status" value="1"/>
</dbReference>
<dbReference type="PANTHER" id="PTHR42847:SF4">
    <property type="entry name" value="ALKANESULFONATE MONOOXYGENASE-RELATED"/>
    <property type="match status" value="1"/>
</dbReference>
<dbReference type="Pfam" id="PF00296">
    <property type="entry name" value="Bac_luciferase"/>
    <property type="match status" value="1"/>
</dbReference>
<dbReference type="SUPFAM" id="SSF51679">
    <property type="entry name" value="Bacterial luciferase-like"/>
    <property type="match status" value="1"/>
</dbReference>
<keyword id="KW-0285">Flavoprotein</keyword>
<keyword id="KW-0288">FMN</keyword>
<keyword id="KW-0503">Monooxygenase</keyword>
<keyword id="KW-0521">NADP</keyword>
<keyword id="KW-0560">Oxidoreductase</keyword>
<gene>
    <name evidence="1" type="primary">rutA</name>
    <name type="ordered locus">ECSP_1181</name>
</gene>
<organism>
    <name type="scientific">Escherichia coli O157:H7 (strain TW14359 / EHEC)</name>
    <dbReference type="NCBI Taxonomy" id="544404"/>
    <lineage>
        <taxon>Bacteria</taxon>
        <taxon>Pseudomonadati</taxon>
        <taxon>Pseudomonadota</taxon>
        <taxon>Gammaproteobacteria</taxon>
        <taxon>Enterobacterales</taxon>
        <taxon>Enterobacteriaceae</taxon>
        <taxon>Escherichia</taxon>
    </lineage>
</organism>
<accession>C6UPN4</accession>
<protein>
    <recommendedName>
        <fullName evidence="1">Pyrimidine monooxygenase RutA</fullName>
        <ecNumber evidence="1">1.14.99.46</ecNumber>
    </recommendedName>
</protein>